<organism>
    <name type="scientific">Homo sapiens</name>
    <name type="common">Human</name>
    <dbReference type="NCBI Taxonomy" id="9606"/>
    <lineage>
        <taxon>Eukaryota</taxon>
        <taxon>Metazoa</taxon>
        <taxon>Chordata</taxon>
        <taxon>Craniata</taxon>
        <taxon>Vertebrata</taxon>
        <taxon>Euteleostomi</taxon>
        <taxon>Mammalia</taxon>
        <taxon>Eutheria</taxon>
        <taxon>Euarchontoglires</taxon>
        <taxon>Primates</taxon>
        <taxon>Haplorrhini</taxon>
        <taxon>Catarrhini</taxon>
        <taxon>Hominidae</taxon>
        <taxon>Homo</taxon>
    </lineage>
</organism>
<feature type="chain" id="PRO_0000247275" description="Apolipoprotein L domain-containing protein 1">
    <location>
        <begin position="1"/>
        <end position="279"/>
    </location>
</feature>
<feature type="transmembrane region" description="Helical" evidence="1">
    <location>
        <begin position="83"/>
        <end position="105"/>
    </location>
</feature>
<feature type="transmembrane region" description="Helical" evidence="1">
    <location>
        <begin position="122"/>
        <end position="142"/>
    </location>
</feature>
<feature type="transmembrane region" description="Helical" evidence="1">
    <location>
        <begin position="192"/>
        <end position="212"/>
    </location>
</feature>
<feature type="coiled-coil region" evidence="1">
    <location>
        <begin position="226"/>
        <end position="253"/>
    </location>
</feature>
<feature type="splice variant" id="VSP_019960" description="In isoform 2." evidence="4 5">
    <location>
        <begin position="2"/>
        <end position="32"/>
    </location>
</feature>
<feature type="sequence variant" id="VAR_089361" description="In BDVAS; likely pathogenic." evidence="3">
    <location>
        <begin position="49"/>
        <end position="279"/>
    </location>
</feature>
<feature type="sequence variant" id="VAR_089362" description="In dbSNP:rs4763876." evidence="3">
    <original>R</original>
    <variation>Q</variation>
    <location>
        <position position="49"/>
    </location>
</feature>
<feature type="sequence conflict" description="In Ref. 1; CAB66717." evidence="6" ref="1">
    <original>G</original>
    <variation>R</variation>
    <location>
        <position position="64"/>
    </location>
</feature>
<gene>
    <name type="primary">APOLD1</name>
    <name type="synonym">VERGE</name>
</gene>
<accession>Q96LR9</accession>
<accession>Q8IVR2</accession>
<accession>Q9H0I5</accession>
<proteinExistence type="evidence at protein level"/>
<dbReference type="EMBL" id="AL136783">
    <property type="protein sequence ID" value="CAB66717.1"/>
    <property type="molecule type" value="mRNA"/>
</dbReference>
<dbReference type="EMBL" id="AK057867">
    <property type="protein sequence ID" value="BAB71601.1"/>
    <property type="molecule type" value="mRNA"/>
</dbReference>
<dbReference type="EMBL" id="BC042478">
    <property type="protein sequence ID" value="AAH42478.1"/>
    <property type="status" value="ALT_INIT"/>
    <property type="molecule type" value="mRNA"/>
</dbReference>
<dbReference type="CCDS" id="CCDS44833.1">
    <molecule id="Q96LR9-1"/>
</dbReference>
<dbReference type="CCDS" id="CCDS8654.1">
    <molecule id="Q96LR9-2"/>
</dbReference>
<dbReference type="RefSeq" id="NP_001123887.1">
    <molecule id="Q96LR9-1"/>
    <property type="nucleotide sequence ID" value="NM_001130415.2"/>
</dbReference>
<dbReference type="RefSeq" id="NP_110444.3">
    <molecule id="Q96LR9-2"/>
    <property type="nucleotide sequence ID" value="NM_030817.3"/>
</dbReference>
<dbReference type="BioGRID" id="123535">
    <property type="interactions" value="7"/>
</dbReference>
<dbReference type="FunCoup" id="Q96LR9">
    <property type="interactions" value="42"/>
</dbReference>
<dbReference type="STRING" id="9606.ENSP00000324277"/>
<dbReference type="GlyCosmos" id="Q96LR9">
    <property type="glycosylation" value="3 sites, 1 glycan"/>
</dbReference>
<dbReference type="GlyGen" id="Q96LR9">
    <property type="glycosylation" value="3 sites, 1 O-linked glycan (3 sites)"/>
</dbReference>
<dbReference type="iPTMnet" id="Q96LR9"/>
<dbReference type="PhosphoSitePlus" id="Q96LR9"/>
<dbReference type="BioMuta" id="APOLD1"/>
<dbReference type="DMDM" id="110832749"/>
<dbReference type="PaxDb" id="9606-ENSP00000324277"/>
<dbReference type="PeptideAtlas" id="Q96LR9"/>
<dbReference type="Antibodypedia" id="11908">
    <property type="antibodies" value="85 antibodies from 24 providers"/>
</dbReference>
<dbReference type="DNASU" id="81575"/>
<dbReference type="Ensembl" id="ENST00000326765.10">
    <molecule id="Q96LR9-1"/>
    <property type="protein sequence ID" value="ENSP00000324277.6"/>
    <property type="gene ID" value="ENSG00000178878.13"/>
</dbReference>
<dbReference type="Ensembl" id="ENST00000356591.5">
    <molecule id="Q96LR9-2"/>
    <property type="protein sequence ID" value="ENSP00000348998.4"/>
    <property type="gene ID" value="ENSG00000178878.13"/>
</dbReference>
<dbReference type="GeneID" id="81575"/>
<dbReference type="KEGG" id="hsa:81575"/>
<dbReference type="MANE-Select" id="ENST00000356591.5">
    <molecule id="Q96LR9-2"/>
    <property type="protein sequence ID" value="ENSP00000348998.4"/>
    <property type="RefSeq nucleotide sequence ID" value="NM_030817.3"/>
    <property type="RefSeq protein sequence ID" value="NP_110444.3"/>
</dbReference>
<dbReference type="UCSC" id="uc001rau.5">
    <molecule id="Q96LR9-1"/>
    <property type="organism name" value="human"/>
</dbReference>
<dbReference type="AGR" id="HGNC:25268"/>
<dbReference type="CTD" id="81575"/>
<dbReference type="DisGeNET" id="81575"/>
<dbReference type="GeneCards" id="APOLD1"/>
<dbReference type="HGNC" id="HGNC:25268">
    <property type="gene designation" value="APOLD1"/>
</dbReference>
<dbReference type="HPA" id="ENSG00000178878">
    <property type="expression patterns" value="Tissue enhanced (adipose)"/>
</dbReference>
<dbReference type="MalaCards" id="APOLD1"/>
<dbReference type="MIM" id="612456">
    <property type="type" value="gene"/>
</dbReference>
<dbReference type="MIM" id="620715">
    <property type="type" value="phenotype"/>
</dbReference>
<dbReference type="neXtProt" id="NX_Q96LR9"/>
<dbReference type="OpenTargets" id="ENSG00000178878"/>
<dbReference type="PharmGKB" id="PA143485306"/>
<dbReference type="VEuPathDB" id="HostDB:ENSG00000178878"/>
<dbReference type="eggNOG" id="ENOG502S2T4">
    <property type="taxonomic scope" value="Eukaryota"/>
</dbReference>
<dbReference type="GeneTree" id="ENSGT01030000234599"/>
<dbReference type="HOGENOM" id="CLU_086689_0_0_1"/>
<dbReference type="InParanoid" id="Q96LR9"/>
<dbReference type="OMA" id="AMDEVCE"/>
<dbReference type="OrthoDB" id="6363454at2759"/>
<dbReference type="PAN-GO" id="Q96LR9">
    <property type="GO annotations" value="3 GO annotations based on evolutionary models"/>
</dbReference>
<dbReference type="PhylomeDB" id="Q96LR9"/>
<dbReference type="TreeFam" id="TF334681"/>
<dbReference type="PathwayCommons" id="Q96LR9"/>
<dbReference type="BioGRID-ORCS" id="81575">
    <property type="hits" value="31 hits in 1143 CRISPR screens"/>
</dbReference>
<dbReference type="ChiTaRS" id="APOLD1">
    <property type="organism name" value="human"/>
</dbReference>
<dbReference type="GeneWiki" id="APOLD1_(gene)"/>
<dbReference type="GenomeRNAi" id="81575"/>
<dbReference type="Pharos" id="Q96LR9">
    <property type="development level" value="Tbio"/>
</dbReference>
<dbReference type="PRO" id="PR:Q96LR9"/>
<dbReference type="Proteomes" id="UP000005640">
    <property type="component" value="Chromosome 12"/>
</dbReference>
<dbReference type="RNAct" id="Q96LR9">
    <property type="molecule type" value="protein"/>
</dbReference>
<dbReference type="Bgee" id="ENSG00000178878">
    <property type="expression patterns" value="Expressed in endothelial cell and 187 other cell types or tissues"/>
</dbReference>
<dbReference type="ExpressionAtlas" id="Q96LR9">
    <property type="expression patterns" value="baseline and differential"/>
</dbReference>
<dbReference type="GO" id="GO:0005911">
    <property type="term" value="C:cell-cell junction"/>
    <property type="evidence" value="ECO:0000314"/>
    <property type="project" value="UniProtKB"/>
</dbReference>
<dbReference type="GO" id="GO:0005576">
    <property type="term" value="C:extracellular region"/>
    <property type="evidence" value="ECO:0007669"/>
    <property type="project" value="InterPro"/>
</dbReference>
<dbReference type="GO" id="GO:0005886">
    <property type="term" value="C:plasma membrane"/>
    <property type="evidence" value="ECO:0007669"/>
    <property type="project" value="UniProtKB-SubCell"/>
</dbReference>
<dbReference type="GO" id="GO:0030133">
    <property type="term" value="C:transport vesicle"/>
    <property type="evidence" value="ECO:0007669"/>
    <property type="project" value="UniProtKB-SubCell"/>
</dbReference>
<dbReference type="GO" id="GO:0033093">
    <property type="term" value="C:Weibel-Palade body"/>
    <property type="evidence" value="ECO:0000314"/>
    <property type="project" value="UniProtKB"/>
</dbReference>
<dbReference type="GO" id="GO:0008289">
    <property type="term" value="F:lipid binding"/>
    <property type="evidence" value="ECO:0000318"/>
    <property type="project" value="GO_Central"/>
</dbReference>
<dbReference type="GO" id="GO:0001525">
    <property type="term" value="P:angiogenesis"/>
    <property type="evidence" value="ECO:0000318"/>
    <property type="project" value="GO_Central"/>
</dbReference>
<dbReference type="GO" id="GO:0160192">
    <property type="term" value="P:autophagosome-dependent secretion"/>
    <property type="evidence" value="ECO:0000315"/>
    <property type="project" value="UniProtKB"/>
</dbReference>
<dbReference type="GO" id="GO:0006869">
    <property type="term" value="P:lipid transport"/>
    <property type="evidence" value="ECO:0007669"/>
    <property type="project" value="InterPro"/>
</dbReference>
<dbReference type="GO" id="GO:0042157">
    <property type="term" value="P:lipoprotein metabolic process"/>
    <property type="evidence" value="ECO:0007669"/>
    <property type="project" value="InterPro"/>
</dbReference>
<dbReference type="GO" id="GO:0045601">
    <property type="term" value="P:regulation of endothelial cell differentiation"/>
    <property type="evidence" value="ECO:0000318"/>
    <property type="project" value="GO_Central"/>
</dbReference>
<dbReference type="GO" id="GO:0090559">
    <property type="term" value="P:regulation of membrane permeability"/>
    <property type="evidence" value="ECO:0000315"/>
    <property type="project" value="UniProtKB"/>
</dbReference>
<dbReference type="InterPro" id="IPR008405">
    <property type="entry name" value="ApoL"/>
</dbReference>
<dbReference type="PANTHER" id="PTHR14096">
    <property type="entry name" value="APOLIPOPROTEIN L"/>
    <property type="match status" value="1"/>
</dbReference>
<dbReference type="PANTHER" id="PTHR14096:SF1">
    <property type="entry name" value="APOLIPOPROTEIN L DOMAIN-CONTAINING PROTEIN 1"/>
    <property type="match status" value="1"/>
</dbReference>
<dbReference type="Pfam" id="PF05461">
    <property type="entry name" value="ApoL"/>
    <property type="match status" value="1"/>
</dbReference>
<name>APLD1_HUMAN</name>
<keyword id="KW-0025">Alternative splicing</keyword>
<keyword id="KW-0965">Cell junction</keyword>
<keyword id="KW-1003">Cell membrane</keyword>
<keyword id="KW-0175">Coiled coil</keyword>
<keyword id="KW-0968">Cytoplasmic vesicle</keyword>
<keyword id="KW-0225">Disease variant</keyword>
<keyword id="KW-0472">Membrane</keyword>
<keyword id="KW-1267">Proteomics identification</keyword>
<keyword id="KW-1185">Reference proteome</keyword>
<keyword id="KW-0812">Transmembrane</keyword>
<keyword id="KW-1133">Transmembrane helix</keyword>
<comment type="function">
    <text evidence="2 3">Is a modulator of endothelial barrier permeability, required for proper organization of endothelial cell-cell junctions and cytoskeleton (PubMed:35638551). It also plays a role in the modulation of secretory autophagy (PubMed:35638551). May affect blood-brain barrier permeability.</text>
</comment>
<comment type="subcellular location">
    <subcellularLocation>
        <location evidence="7">Cell membrane</location>
        <topology evidence="7">Multi-pass membrane protein</topology>
    </subcellularLocation>
    <subcellularLocation>
        <location evidence="3">Cell junction</location>
    </subcellularLocation>
    <subcellularLocation>
        <location evidence="3">Cytoplasmic vesicle</location>
        <location evidence="3">Secretory vesicle</location>
    </subcellularLocation>
    <text evidence="3">Localized to Weibel-Palade bodies, secretory granules characteristic of vascular endothelial cells.</text>
</comment>
<comment type="alternative products">
    <event type="alternative splicing"/>
    <isoform>
        <id>Q96LR9-1</id>
        <name>1</name>
        <sequence type="displayed"/>
    </isoform>
    <isoform>
        <id>Q96LR9-2</id>
        <name>2</name>
        <sequence type="described" ref="VSP_019960"/>
    </isoform>
</comment>
<comment type="tissue specificity">
    <text evidence="2">Expressed in neonatal dermal microvascular endothelial cells.</text>
</comment>
<comment type="induction">
    <text evidence="2">In neonatal dermal microvascular endothelial cells, by hypoxia.</text>
</comment>
<comment type="disease" evidence="3">
    <disease id="DI-06847">
        <name>Bleeding disorder, vascular-type</name>
        <acronym>BDVAS</acronym>
        <description>An autosomal dominant disorder characterized by increased bleeding tendency, without platelet dysfunction. Affected individuals experience spontaneous episodic bleeding, usually beginning in childhood. Clinical manifestations include epistaxis, oral cavity bleeding, menorrhagia, and excessive bleeding during surgery or childbirth.</description>
        <dbReference type="MIM" id="620715"/>
    </disease>
    <text>The disease may be caused by variants affecting the gene represented in this entry.</text>
</comment>
<comment type="similarity">
    <text evidence="6">Belongs to the apolipoprotein L family.</text>
</comment>
<comment type="sequence caution" evidence="6">
    <conflict type="erroneous initiation">
        <sequence resource="EMBL-CDS" id="AAH42478"/>
    </conflict>
</comment>
<evidence type="ECO:0000255" key="1"/>
<evidence type="ECO:0000269" key="2">
    <source>
    </source>
</evidence>
<evidence type="ECO:0000269" key="3">
    <source>
    </source>
</evidence>
<evidence type="ECO:0000303" key="4">
    <source>
    </source>
</evidence>
<evidence type="ECO:0000303" key="5">
    <source>
    </source>
</evidence>
<evidence type="ECO:0000305" key="6"/>
<evidence type="ECO:0000305" key="7">
    <source>
    </source>
</evidence>
<sequence length="279" mass="30546">MFRAPCHRLRARGTRKARAGAWRGCTFPCLGKGMERPAAREPHGPDALRRFQGLLLDRRGRLHGQVLRLREVARRLERLRRRSLVANVAGSSLSATGALAAIVGLSLSPVTLGTSLLVSAVGLGVATAGGAVTITSDLSLIFCNSRELRRVQEIAATCQDQMREILSCLEFFCRWQGCGDRQLLQCGRNASIALYNSVYFIVFFGSRGFLIPRRAEGDTKVSQAVLKAKIQKLAESLESCTGALDELSEQLESRVQLCTKSSRGHDLKISADQRAGLFF</sequence>
<protein>
    <recommendedName>
        <fullName>Apolipoprotein L domain-containing protein 1</fullName>
    </recommendedName>
    <alternativeName>
        <fullName>Vascular early response gene protein</fullName>
    </alternativeName>
</protein>
<reference key="1">
    <citation type="journal article" date="2001" name="Genome Res.">
        <title>Towards a catalog of human genes and proteins: sequencing and analysis of 500 novel complete protein coding human cDNAs.</title>
        <authorList>
            <person name="Wiemann S."/>
            <person name="Weil B."/>
            <person name="Wellenreuther R."/>
            <person name="Gassenhuber J."/>
            <person name="Glassl S."/>
            <person name="Ansorge W."/>
            <person name="Boecher M."/>
            <person name="Bloecker H."/>
            <person name="Bauersachs S."/>
            <person name="Blum H."/>
            <person name="Lauber J."/>
            <person name="Duesterhoeft A."/>
            <person name="Beyer A."/>
            <person name="Koehrer K."/>
            <person name="Strack N."/>
            <person name="Mewes H.-W."/>
            <person name="Ottenwaelder B."/>
            <person name="Obermaier B."/>
            <person name="Tampe J."/>
            <person name="Heubner D."/>
            <person name="Wambutt R."/>
            <person name="Korn B."/>
            <person name="Klein M."/>
            <person name="Poustka A."/>
        </authorList>
    </citation>
    <scope>NUCLEOTIDE SEQUENCE [LARGE SCALE MRNA] (ISOFORM 2)</scope>
    <source>
        <tissue>Testis</tissue>
    </source>
</reference>
<reference key="2">
    <citation type="journal article" date="2004" name="Nat. Genet.">
        <title>Complete sequencing and characterization of 21,243 full-length human cDNAs.</title>
        <authorList>
            <person name="Ota T."/>
            <person name="Suzuki Y."/>
            <person name="Nishikawa T."/>
            <person name="Otsuki T."/>
            <person name="Sugiyama T."/>
            <person name="Irie R."/>
            <person name="Wakamatsu A."/>
            <person name="Hayashi K."/>
            <person name="Sato H."/>
            <person name="Nagai K."/>
            <person name="Kimura K."/>
            <person name="Makita H."/>
            <person name="Sekine M."/>
            <person name="Obayashi M."/>
            <person name="Nishi T."/>
            <person name="Shibahara T."/>
            <person name="Tanaka T."/>
            <person name="Ishii S."/>
            <person name="Yamamoto J."/>
            <person name="Saito K."/>
            <person name="Kawai Y."/>
            <person name="Isono Y."/>
            <person name="Nakamura Y."/>
            <person name="Nagahari K."/>
            <person name="Murakami K."/>
            <person name="Yasuda T."/>
            <person name="Iwayanagi T."/>
            <person name="Wagatsuma M."/>
            <person name="Shiratori A."/>
            <person name="Sudo H."/>
            <person name="Hosoiri T."/>
            <person name="Kaku Y."/>
            <person name="Kodaira H."/>
            <person name="Kondo H."/>
            <person name="Sugawara M."/>
            <person name="Takahashi M."/>
            <person name="Kanda K."/>
            <person name="Yokoi T."/>
            <person name="Furuya T."/>
            <person name="Kikkawa E."/>
            <person name="Omura Y."/>
            <person name="Abe K."/>
            <person name="Kamihara K."/>
            <person name="Katsuta N."/>
            <person name="Sato K."/>
            <person name="Tanikawa M."/>
            <person name="Yamazaki M."/>
            <person name="Ninomiya K."/>
            <person name="Ishibashi T."/>
            <person name="Yamashita H."/>
            <person name="Murakawa K."/>
            <person name="Fujimori K."/>
            <person name="Tanai H."/>
            <person name="Kimata M."/>
            <person name="Watanabe M."/>
            <person name="Hiraoka S."/>
            <person name="Chiba Y."/>
            <person name="Ishida S."/>
            <person name="Ono Y."/>
            <person name="Takiguchi S."/>
            <person name="Watanabe S."/>
            <person name="Yosida M."/>
            <person name="Hotuta T."/>
            <person name="Kusano J."/>
            <person name="Kanehori K."/>
            <person name="Takahashi-Fujii A."/>
            <person name="Hara H."/>
            <person name="Tanase T.-O."/>
            <person name="Nomura Y."/>
            <person name="Togiya S."/>
            <person name="Komai F."/>
            <person name="Hara R."/>
            <person name="Takeuchi K."/>
            <person name="Arita M."/>
            <person name="Imose N."/>
            <person name="Musashino K."/>
            <person name="Yuuki H."/>
            <person name="Oshima A."/>
            <person name="Sasaki N."/>
            <person name="Aotsuka S."/>
            <person name="Yoshikawa Y."/>
            <person name="Matsunawa H."/>
            <person name="Ichihara T."/>
            <person name="Shiohata N."/>
            <person name="Sano S."/>
            <person name="Moriya S."/>
            <person name="Momiyama H."/>
            <person name="Satoh N."/>
            <person name="Takami S."/>
            <person name="Terashima Y."/>
            <person name="Suzuki O."/>
            <person name="Nakagawa S."/>
            <person name="Senoh A."/>
            <person name="Mizoguchi H."/>
            <person name="Goto Y."/>
            <person name="Shimizu F."/>
            <person name="Wakebe H."/>
            <person name="Hishigaki H."/>
            <person name="Watanabe T."/>
            <person name="Sugiyama A."/>
            <person name="Takemoto M."/>
            <person name="Kawakami B."/>
            <person name="Yamazaki M."/>
            <person name="Watanabe K."/>
            <person name="Kumagai A."/>
            <person name="Itakura S."/>
            <person name="Fukuzumi Y."/>
            <person name="Fujimori Y."/>
            <person name="Komiyama M."/>
            <person name="Tashiro H."/>
            <person name="Tanigami A."/>
            <person name="Fujiwara T."/>
            <person name="Ono T."/>
            <person name="Yamada K."/>
            <person name="Fujii Y."/>
            <person name="Ozaki K."/>
            <person name="Hirao M."/>
            <person name="Ohmori Y."/>
            <person name="Kawabata A."/>
            <person name="Hikiji T."/>
            <person name="Kobatake N."/>
            <person name="Inagaki H."/>
            <person name="Ikema Y."/>
            <person name="Okamoto S."/>
            <person name="Okitani R."/>
            <person name="Kawakami T."/>
            <person name="Noguchi S."/>
            <person name="Itoh T."/>
            <person name="Shigeta K."/>
            <person name="Senba T."/>
            <person name="Matsumura K."/>
            <person name="Nakajima Y."/>
            <person name="Mizuno T."/>
            <person name="Morinaga M."/>
            <person name="Sasaki M."/>
            <person name="Togashi T."/>
            <person name="Oyama M."/>
            <person name="Hata H."/>
            <person name="Watanabe M."/>
            <person name="Komatsu T."/>
            <person name="Mizushima-Sugano J."/>
            <person name="Satoh T."/>
            <person name="Shirai Y."/>
            <person name="Takahashi Y."/>
            <person name="Nakagawa K."/>
            <person name="Okumura K."/>
            <person name="Nagase T."/>
            <person name="Nomura N."/>
            <person name="Kikuchi H."/>
            <person name="Masuho Y."/>
            <person name="Yamashita R."/>
            <person name="Nakai K."/>
            <person name="Yada T."/>
            <person name="Nakamura Y."/>
            <person name="Ohara O."/>
            <person name="Isogai T."/>
            <person name="Sugano S."/>
        </authorList>
    </citation>
    <scope>NUCLEOTIDE SEQUENCE [LARGE SCALE MRNA] (ISOFORM 2)</scope>
    <source>
        <tissue>Brain</tissue>
    </source>
</reference>
<reference key="3">
    <citation type="journal article" date="2004" name="Genome Res.">
        <title>The status, quality, and expansion of the NIH full-length cDNA project: the Mammalian Gene Collection (MGC).</title>
        <authorList>
            <consortium name="The MGC Project Team"/>
        </authorList>
    </citation>
    <scope>NUCLEOTIDE SEQUENCE [LARGE SCALE MRNA] (ISOFORM 1)</scope>
    <source>
        <tissue>Eye</tissue>
    </source>
</reference>
<reference key="4">
    <citation type="journal article" date="2004" name="J. Neurosci.">
        <title>Verge: a novel vascular early response gene.</title>
        <authorList>
            <person name="Regard J.B."/>
            <person name="Scheek S."/>
            <person name="Borbiev T."/>
            <person name="Lanahan A.A."/>
            <person name="Schneider A."/>
            <person name="Demetriades A.-M."/>
            <person name="Hiemisch H."/>
            <person name="Barnes C.A."/>
            <person name="Verin A.D."/>
            <person name="Worley P.F."/>
        </authorList>
    </citation>
    <scope>FUNCTION</scope>
    <scope>INDUCTION</scope>
    <scope>TISSUE SPECIFICITY</scope>
    <scope>SUBCELLULAR LOCATION</scope>
</reference>
<reference key="5">
    <citation type="journal article" date="2023" name="Haematologica">
        <title>APOLD1 loss causes endothelial dysfunction involving cell junctions, cytoskeletal architecture, and Weibel-Palade bodies, while disrupting hemostasis.</title>
        <authorList>
            <person name="Stritt S."/>
            <person name="Nurden P."/>
            <person name="Nurden A.T."/>
            <person name="Schved J.F."/>
            <person name="Bordet J.C."/>
            <person name="Roux M."/>
            <person name="Alessi M.C."/>
            <person name="Tregouet D.A."/>
            <person name="Maekinen T."/>
            <person name="Giansily-Blaizot M."/>
        </authorList>
    </citation>
    <scope>FUNCTION</scope>
    <scope>SUBCELLULAR LOCATION</scope>
    <scope>VARIANT BDVAS 49-ARG--PHE-279 DEL</scope>
    <scope>VARIANT GLN-49</scope>
    <scope>INVOLVEMENT IN BDVAS</scope>
</reference>